<comment type="function">
    <text evidence="1">Catalyzes the NADPH-dependent formation of L-aspartate-semialdehyde (L-ASA) by the reductive dephosphorylation of L-aspartyl-4-phosphate.</text>
</comment>
<comment type="catalytic activity">
    <reaction evidence="1">
        <text>L-aspartate 4-semialdehyde + phosphate + NADP(+) = 4-phospho-L-aspartate + NADPH + H(+)</text>
        <dbReference type="Rhea" id="RHEA:24284"/>
        <dbReference type="ChEBI" id="CHEBI:15378"/>
        <dbReference type="ChEBI" id="CHEBI:43474"/>
        <dbReference type="ChEBI" id="CHEBI:57535"/>
        <dbReference type="ChEBI" id="CHEBI:57783"/>
        <dbReference type="ChEBI" id="CHEBI:58349"/>
        <dbReference type="ChEBI" id="CHEBI:537519"/>
        <dbReference type="EC" id="1.2.1.11"/>
    </reaction>
</comment>
<comment type="pathway">
    <text evidence="1">Amino-acid biosynthesis; L-lysine biosynthesis via DAP pathway; (S)-tetrahydrodipicolinate from L-aspartate: step 2/4.</text>
</comment>
<comment type="pathway">
    <text evidence="1">Amino-acid biosynthesis; L-methionine biosynthesis via de novo pathway; L-homoserine from L-aspartate: step 2/3.</text>
</comment>
<comment type="pathway">
    <text evidence="1">Amino-acid biosynthesis; L-threonine biosynthesis; L-threonine from L-aspartate: step 2/5.</text>
</comment>
<comment type="subunit">
    <text>Homodimer.</text>
</comment>
<comment type="similarity">
    <text evidence="1">Belongs to the aspartate-semialdehyde dehydrogenase family.</text>
</comment>
<evidence type="ECO:0000255" key="1">
    <source>
        <dbReference type="HAMAP-Rule" id="MF_02121"/>
    </source>
</evidence>
<feature type="chain" id="PRO_0000141384" description="Aspartate-semialdehyde dehydrogenase">
    <location>
        <begin position="1"/>
        <end position="371"/>
    </location>
</feature>
<feature type="active site" description="Acyl-thioester intermediate" evidence="1">
    <location>
        <position position="135"/>
    </location>
</feature>
<feature type="active site" description="Proton acceptor" evidence="1">
    <location>
        <position position="275"/>
    </location>
</feature>
<feature type="binding site" evidence="1">
    <location>
        <begin position="9"/>
        <end position="12"/>
    </location>
    <ligand>
        <name>NADP(+)</name>
        <dbReference type="ChEBI" id="CHEBI:58349"/>
    </ligand>
</feature>
<feature type="binding site" evidence="1">
    <location>
        <begin position="37"/>
        <end position="38"/>
    </location>
    <ligand>
        <name>NADP(+)</name>
        <dbReference type="ChEBI" id="CHEBI:58349"/>
    </ligand>
</feature>
<feature type="binding site" evidence="1">
    <location>
        <position position="73"/>
    </location>
    <ligand>
        <name>NADP(+)</name>
        <dbReference type="ChEBI" id="CHEBI:58349"/>
    </ligand>
</feature>
<feature type="binding site" evidence="1">
    <location>
        <position position="102"/>
    </location>
    <ligand>
        <name>phosphate</name>
        <dbReference type="ChEBI" id="CHEBI:43474"/>
    </ligand>
</feature>
<feature type="binding site" evidence="1">
    <location>
        <position position="162"/>
    </location>
    <ligand>
        <name>substrate</name>
    </ligand>
</feature>
<feature type="binding site" evidence="1">
    <location>
        <begin position="165"/>
        <end position="166"/>
    </location>
    <ligand>
        <name>NADP(+)</name>
        <dbReference type="ChEBI" id="CHEBI:58349"/>
    </ligand>
</feature>
<feature type="binding site" evidence="1">
    <location>
        <position position="193"/>
    </location>
    <ligand>
        <name>NADP(+)</name>
        <dbReference type="ChEBI" id="CHEBI:58349"/>
    </ligand>
</feature>
<feature type="binding site" evidence="1">
    <location>
        <position position="241"/>
    </location>
    <ligand>
        <name>substrate</name>
    </ligand>
</feature>
<feature type="binding site" evidence="1">
    <location>
        <position position="244"/>
    </location>
    <ligand>
        <name>phosphate</name>
        <dbReference type="ChEBI" id="CHEBI:43474"/>
    </ligand>
</feature>
<feature type="binding site" evidence="1">
    <location>
        <position position="268"/>
    </location>
    <ligand>
        <name>substrate</name>
    </ligand>
</feature>
<feature type="binding site" evidence="1">
    <location>
        <position position="351"/>
    </location>
    <ligand>
        <name>NADP(+)</name>
        <dbReference type="ChEBI" id="CHEBI:58349"/>
    </ligand>
</feature>
<accession>P57008</accession>
<accession>A1IPI2</accession>
<organism>
    <name type="scientific">Neisseria meningitidis serogroup A / serotype 4A (strain DSM 15465 / Z2491)</name>
    <dbReference type="NCBI Taxonomy" id="122587"/>
    <lineage>
        <taxon>Bacteria</taxon>
        <taxon>Pseudomonadati</taxon>
        <taxon>Pseudomonadota</taxon>
        <taxon>Betaproteobacteria</taxon>
        <taxon>Neisseriales</taxon>
        <taxon>Neisseriaceae</taxon>
        <taxon>Neisseria</taxon>
    </lineage>
</organism>
<sequence length="371" mass="40044">MKVGFVGWRGMVGSVLMQRMKEENDFAHIPEAFFFTTSNVGGAAPDFGQAAKTLLDANDVAELAKMDIIVTCQGGDYTKSVFQPLRDSGWNGYWVDAASSLRMKDDAIIVLDPVNRNVIDNGLKNGVKNYIGGNCTVSLMLMALGGLFQNDLVEWATSMTYQAASGAGAKNMRELISGMGAIHAKVADELADPSSAILDIDRKVSDFLRSEDYPKANFGVPLAGSLIPWIDVDLGNGQSKEEWKGGVETNKILGRSDNPTVIDGLCVRIGSMRCHSQALTLKLKKDLPVSEIEAILAGANDWVKVIPNEKEASIHELTPAKVTGTLSVPVGRIRKLEMGGEYISAFTVGDQLLWGAAEPLRRVLRIVLGSL</sequence>
<dbReference type="EC" id="1.2.1.11" evidence="1"/>
<dbReference type="EMBL" id="AL157959">
    <property type="protein sequence ID" value="CAM07651.1"/>
    <property type="molecule type" value="Genomic_DNA"/>
</dbReference>
<dbReference type="PIR" id="D82031">
    <property type="entry name" value="D82031"/>
</dbReference>
<dbReference type="RefSeq" id="WP_002246521.1">
    <property type="nucleotide sequence ID" value="NC_003116.1"/>
</dbReference>
<dbReference type="SMR" id="P57008"/>
<dbReference type="EnsemblBacteria" id="CAM07651">
    <property type="protein sequence ID" value="CAM07651"/>
    <property type="gene ID" value="NMA0351"/>
</dbReference>
<dbReference type="GeneID" id="93387009"/>
<dbReference type="KEGG" id="nma:NMA0351"/>
<dbReference type="HOGENOM" id="CLU_066397_0_0_4"/>
<dbReference type="UniPathway" id="UPA00034">
    <property type="reaction ID" value="UER00016"/>
</dbReference>
<dbReference type="UniPathway" id="UPA00050">
    <property type="reaction ID" value="UER00463"/>
</dbReference>
<dbReference type="UniPathway" id="UPA00051">
    <property type="reaction ID" value="UER00464"/>
</dbReference>
<dbReference type="Proteomes" id="UP000000626">
    <property type="component" value="Chromosome"/>
</dbReference>
<dbReference type="GO" id="GO:0004073">
    <property type="term" value="F:aspartate-semialdehyde dehydrogenase activity"/>
    <property type="evidence" value="ECO:0007669"/>
    <property type="project" value="UniProtKB-UniRule"/>
</dbReference>
<dbReference type="GO" id="GO:0051287">
    <property type="term" value="F:NAD binding"/>
    <property type="evidence" value="ECO:0007669"/>
    <property type="project" value="InterPro"/>
</dbReference>
<dbReference type="GO" id="GO:0050661">
    <property type="term" value="F:NADP binding"/>
    <property type="evidence" value="ECO:0007669"/>
    <property type="project" value="UniProtKB-UniRule"/>
</dbReference>
<dbReference type="GO" id="GO:0046983">
    <property type="term" value="F:protein dimerization activity"/>
    <property type="evidence" value="ECO:0007669"/>
    <property type="project" value="InterPro"/>
</dbReference>
<dbReference type="GO" id="GO:0071266">
    <property type="term" value="P:'de novo' L-methionine biosynthetic process"/>
    <property type="evidence" value="ECO:0007669"/>
    <property type="project" value="UniProtKB-UniRule"/>
</dbReference>
<dbReference type="GO" id="GO:0019877">
    <property type="term" value="P:diaminopimelate biosynthetic process"/>
    <property type="evidence" value="ECO:0007669"/>
    <property type="project" value="UniProtKB-UniRule"/>
</dbReference>
<dbReference type="GO" id="GO:0009097">
    <property type="term" value="P:isoleucine biosynthetic process"/>
    <property type="evidence" value="ECO:0007669"/>
    <property type="project" value="InterPro"/>
</dbReference>
<dbReference type="GO" id="GO:0009089">
    <property type="term" value="P:lysine biosynthetic process via diaminopimelate"/>
    <property type="evidence" value="ECO:0007669"/>
    <property type="project" value="UniProtKB-UniRule"/>
</dbReference>
<dbReference type="GO" id="GO:0009088">
    <property type="term" value="P:threonine biosynthetic process"/>
    <property type="evidence" value="ECO:0007669"/>
    <property type="project" value="UniProtKB-UniRule"/>
</dbReference>
<dbReference type="CDD" id="cd23938">
    <property type="entry name" value="ASADH_C_bac_like"/>
    <property type="match status" value="1"/>
</dbReference>
<dbReference type="CDD" id="cd02314">
    <property type="entry name" value="VcASADH1_like_N"/>
    <property type="match status" value="1"/>
</dbReference>
<dbReference type="Gene3D" id="3.30.360.10">
    <property type="entry name" value="Dihydrodipicolinate Reductase, domain 2"/>
    <property type="match status" value="1"/>
</dbReference>
<dbReference type="Gene3D" id="3.40.50.720">
    <property type="entry name" value="NAD(P)-binding Rossmann-like Domain"/>
    <property type="match status" value="1"/>
</dbReference>
<dbReference type="HAMAP" id="MF_02121">
    <property type="entry name" value="ASADH"/>
    <property type="match status" value="1"/>
</dbReference>
<dbReference type="InterPro" id="IPR000319">
    <property type="entry name" value="Asp-semialdehyde_DH_CS"/>
</dbReference>
<dbReference type="InterPro" id="IPR011534">
    <property type="entry name" value="Asp_ADH_gamma-type"/>
</dbReference>
<dbReference type="InterPro" id="IPR012080">
    <property type="entry name" value="Asp_semialdehyde_DH"/>
</dbReference>
<dbReference type="InterPro" id="IPR036291">
    <property type="entry name" value="NAD(P)-bd_dom_sf"/>
</dbReference>
<dbReference type="InterPro" id="IPR000534">
    <property type="entry name" value="Semialdehyde_DH_NAD-bd"/>
</dbReference>
<dbReference type="InterPro" id="IPR012280">
    <property type="entry name" value="Semialdhyde_DH_dimer_dom"/>
</dbReference>
<dbReference type="NCBIfam" id="TIGR01745">
    <property type="entry name" value="asd_gamma"/>
    <property type="match status" value="1"/>
</dbReference>
<dbReference type="NCBIfam" id="NF005144">
    <property type="entry name" value="PRK06598.1"/>
    <property type="match status" value="1"/>
</dbReference>
<dbReference type="PANTHER" id="PTHR46278:SF4">
    <property type="entry name" value="ASPARTATE-SEMIALDEHYDE DEHYDROGENASE"/>
    <property type="match status" value="1"/>
</dbReference>
<dbReference type="PANTHER" id="PTHR46278">
    <property type="entry name" value="DEHYDROGENASE, PUTATIVE-RELATED"/>
    <property type="match status" value="1"/>
</dbReference>
<dbReference type="Pfam" id="PF01118">
    <property type="entry name" value="Semialdhyde_dh"/>
    <property type="match status" value="1"/>
</dbReference>
<dbReference type="Pfam" id="PF02774">
    <property type="entry name" value="Semialdhyde_dhC"/>
    <property type="match status" value="1"/>
</dbReference>
<dbReference type="PIRSF" id="PIRSF000148">
    <property type="entry name" value="ASA_dh"/>
    <property type="match status" value="1"/>
</dbReference>
<dbReference type="SMART" id="SM00859">
    <property type="entry name" value="Semialdhyde_dh"/>
    <property type="match status" value="1"/>
</dbReference>
<dbReference type="SUPFAM" id="SSF55347">
    <property type="entry name" value="Glyceraldehyde-3-phosphate dehydrogenase-like, C-terminal domain"/>
    <property type="match status" value="1"/>
</dbReference>
<dbReference type="SUPFAM" id="SSF51735">
    <property type="entry name" value="NAD(P)-binding Rossmann-fold domains"/>
    <property type="match status" value="1"/>
</dbReference>
<dbReference type="PROSITE" id="PS01103">
    <property type="entry name" value="ASD"/>
    <property type="match status" value="1"/>
</dbReference>
<reference key="1">
    <citation type="journal article" date="2000" name="Nature">
        <title>Complete DNA sequence of a serogroup A strain of Neisseria meningitidis Z2491.</title>
        <authorList>
            <person name="Parkhill J."/>
            <person name="Achtman M."/>
            <person name="James K.D."/>
            <person name="Bentley S.D."/>
            <person name="Churcher C.M."/>
            <person name="Klee S.R."/>
            <person name="Morelli G."/>
            <person name="Basham D."/>
            <person name="Brown D."/>
            <person name="Chillingworth T."/>
            <person name="Davies R.M."/>
            <person name="Davis P."/>
            <person name="Devlin K."/>
            <person name="Feltwell T."/>
            <person name="Hamlin N."/>
            <person name="Holroyd S."/>
            <person name="Jagels K."/>
            <person name="Leather S."/>
            <person name="Moule S."/>
            <person name="Mungall K.L."/>
            <person name="Quail M.A."/>
            <person name="Rajandream M.A."/>
            <person name="Rutherford K.M."/>
            <person name="Simmonds M."/>
            <person name="Skelton J."/>
            <person name="Whitehead S."/>
            <person name="Spratt B.G."/>
            <person name="Barrell B.G."/>
        </authorList>
    </citation>
    <scope>NUCLEOTIDE SEQUENCE [LARGE SCALE GENOMIC DNA]</scope>
    <source>
        <strain>DSM 15465 / Z2491</strain>
    </source>
</reference>
<gene>
    <name evidence="1" type="primary">asd</name>
    <name type="ordered locus">NMA0351</name>
</gene>
<protein>
    <recommendedName>
        <fullName evidence="1">Aspartate-semialdehyde dehydrogenase</fullName>
        <shortName evidence="1">ASA dehydrogenase</shortName>
        <shortName evidence="1">ASADH</shortName>
        <ecNumber evidence="1">1.2.1.11</ecNumber>
    </recommendedName>
    <alternativeName>
        <fullName evidence="1">Aspartate-beta-semialdehyde dehydrogenase</fullName>
    </alternativeName>
</protein>
<keyword id="KW-0028">Amino-acid biosynthesis</keyword>
<keyword id="KW-0220">Diaminopimelate biosynthesis</keyword>
<keyword id="KW-0457">Lysine biosynthesis</keyword>
<keyword id="KW-0486">Methionine biosynthesis</keyword>
<keyword id="KW-0521">NADP</keyword>
<keyword id="KW-0560">Oxidoreductase</keyword>
<keyword id="KW-0791">Threonine biosynthesis</keyword>
<name>DHAS_NEIMA</name>
<proteinExistence type="inferred from homology"/>